<proteinExistence type="inferred from homology"/>
<name>MCSB_LISMH</name>
<organism>
    <name type="scientific">Listeria monocytogenes serotype 4a (strain HCC23)</name>
    <dbReference type="NCBI Taxonomy" id="552536"/>
    <lineage>
        <taxon>Bacteria</taxon>
        <taxon>Bacillati</taxon>
        <taxon>Bacillota</taxon>
        <taxon>Bacilli</taxon>
        <taxon>Bacillales</taxon>
        <taxon>Listeriaceae</taxon>
        <taxon>Listeria</taxon>
    </lineage>
</organism>
<comment type="function">
    <text evidence="1">Catalyzes the specific phosphorylation of arginine residues in proteins.</text>
</comment>
<comment type="catalytic activity">
    <reaction evidence="1">
        <text>L-arginyl-[protein] + ATP = N(omega)-phospho-L-arginyl-[protein] + ADP + H(+)</text>
        <dbReference type="Rhea" id="RHEA:43384"/>
        <dbReference type="Rhea" id="RHEA-COMP:10532"/>
        <dbReference type="Rhea" id="RHEA-COMP:10533"/>
        <dbReference type="ChEBI" id="CHEBI:15378"/>
        <dbReference type="ChEBI" id="CHEBI:29965"/>
        <dbReference type="ChEBI" id="CHEBI:30616"/>
        <dbReference type="ChEBI" id="CHEBI:83226"/>
        <dbReference type="ChEBI" id="CHEBI:456216"/>
        <dbReference type="EC" id="2.7.14.1"/>
    </reaction>
</comment>
<comment type="similarity">
    <text evidence="1">Belongs to the ATP:guanido phosphotransferase family.</text>
</comment>
<keyword id="KW-0067">ATP-binding</keyword>
<keyword id="KW-0418">Kinase</keyword>
<keyword id="KW-0547">Nucleotide-binding</keyword>
<keyword id="KW-0808">Transferase</keyword>
<evidence type="ECO:0000255" key="1">
    <source>
        <dbReference type="HAMAP-Rule" id="MF_00602"/>
    </source>
</evidence>
<accession>B8DGJ3</accession>
<protein>
    <recommendedName>
        <fullName evidence="1">Protein-arginine kinase</fullName>
        <ecNumber evidence="1">2.7.14.1</ecNumber>
    </recommendedName>
</protein>
<sequence>MNVFEPRLSSWLENAGDDDDVVLSSRIRLARNLKDEQFPIYEQKEEIVDKIAGAFDDNFTLIKMNQISHLEKALLVEKHLISPYMMNKSEYGAVLLNEEENVSIMLNEEDHLRIQCMTPGLRLFDALEAALQIDGYVEEKLSYAFDKQFGYLTSCVTNIGTGMRASVMVHLPGLVTTKRIKSVIEAIRSLGFVVRGIYGEGSLPASSIFQVSNQVTLGKTETEIVEDLTQVMEQIIMQERIARTTLKQKFHIALEDRVFRSYGLLTNCRIISMREASDAISDVRLGVELGFFEHISRQKMNELVLFSQPAFLRREAGRDMDELEEKVIRAKVIREILGDK</sequence>
<gene>
    <name evidence="1" type="primary">mcsB</name>
    <name type="ordered locus">LMHCC_2409</name>
</gene>
<reference key="1">
    <citation type="journal article" date="2011" name="J. Bacteriol.">
        <title>Genome sequence of lineage III Listeria monocytogenes strain HCC23.</title>
        <authorList>
            <person name="Steele C.L."/>
            <person name="Donaldson J.R."/>
            <person name="Paul D."/>
            <person name="Banes M.M."/>
            <person name="Arick T."/>
            <person name="Bridges S.M."/>
            <person name="Lawrence M.L."/>
        </authorList>
    </citation>
    <scope>NUCLEOTIDE SEQUENCE [LARGE SCALE GENOMIC DNA]</scope>
    <source>
        <strain>HCC23</strain>
    </source>
</reference>
<feature type="chain" id="PRO_1000147063" description="Protein-arginine kinase">
    <location>
        <begin position="1"/>
        <end position="340"/>
    </location>
</feature>
<feature type="domain" description="Phosphagen kinase C-terminal" evidence="1">
    <location>
        <begin position="21"/>
        <end position="242"/>
    </location>
</feature>
<feature type="binding site" evidence="1">
    <location>
        <begin position="24"/>
        <end position="28"/>
    </location>
    <ligand>
        <name>ATP</name>
        <dbReference type="ChEBI" id="CHEBI:30616"/>
    </ligand>
</feature>
<feature type="binding site" evidence="1">
    <location>
        <position position="79"/>
    </location>
    <ligand>
        <name>ATP</name>
        <dbReference type="ChEBI" id="CHEBI:30616"/>
    </ligand>
</feature>
<feature type="binding site" evidence="1">
    <location>
        <position position="113"/>
    </location>
    <ligand>
        <name>ATP</name>
        <dbReference type="ChEBI" id="CHEBI:30616"/>
    </ligand>
</feature>
<feature type="binding site" evidence="1">
    <location>
        <begin position="164"/>
        <end position="168"/>
    </location>
    <ligand>
        <name>ATP</name>
        <dbReference type="ChEBI" id="CHEBI:30616"/>
    </ligand>
</feature>
<feature type="binding site" evidence="1">
    <location>
        <begin position="195"/>
        <end position="200"/>
    </location>
    <ligand>
        <name>ATP</name>
        <dbReference type="ChEBI" id="CHEBI:30616"/>
    </ligand>
</feature>
<dbReference type="EC" id="2.7.14.1" evidence="1"/>
<dbReference type="EMBL" id="CP001175">
    <property type="protein sequence ID" value="ACK40746.1"/>
    <property type="molecule type" value="Genomic_DNA"/>
</dbReference>
<dbReference type="RefSeq" id="WP_012582076.1">
    <property type="nucleotide sequence ID" value="NC_011660.1"/>
</dbReference>
<dbReference type="SMR" id="B8DGJ3"/>
<dbReference type="KEGG" id="lmh:LMHCC_2409"/>
<dbReference type="HOGENOM" id="CLU_066591_1_0_9"/>
<dbReference type="GO" id="GO:0005615">
    <property type="term" value="C:extracellular space"/>
    <property type="evidence" value="ECO:0007669"/>
    <property type="project" value="TreeGrafter"/>
</dbReference>
<dbReference type="GO" id="GO:0005524">
    <property type="term" value="F:ATP binding"/>
    <property type="evidence" value="ECO:0007669"/>
    <property type="project" value="UniProtKB-KW"/>
</dbReference>
<dbReference type="GO" id="GO:0004111">
    <property type="term" value="F:creatine kinase activity"/>
    <property type="evidence" value="ECO:0007669"/>
    <property type="project" value="InterPro"/>
</dbReference>
<dbReference type="GO" id="GO:0004672">
    <property type="term" value="F:protein kinase activity"/>
    <property type="evidence" value="ECO:0007669"/>
    <property type="project" value="UniProtKB-UniRule"/>
</dbReference>
<dbReference type="GO" id="GO:0046314">
    <property type="term" value="P:phosphocreatine biosynthetic process"/>
    <property type="evidence" value="ECO:0007669"/>
    <property type="project" value="InterPro"/>
</dbReference>
<dbReference type="CDD" id="cd07930">
    <property type="entry name" value="bacterial_phosphagen_kinase"/>
    <property type="match status" value="1"/>
</dbReference>
<dbReference type="FunFam" id="3.30.590.10:FF:000007">
    <property type="entry name" value="Protein-arginine kinase"/>
    <property type="match status" value="1"/>
</dbReference>
<dbReference type="Gene3D" id="3.30.590.10">
    <property type="entry name" value="Glutamine synthetase/guanido kinase, catalytic domain"/>
    <property type="match status" value="1"/>
</dbReference>
<dbReference type="HAMAP" id="MF_00602">
    <property type="entry name" value="Prot_Arg_kinase"/>
    <property type="match status" value="1"/>
</dbReference>
<dbReference type="InterPro" id="IPR023660">
    <property type="entry name" value="Arg_Kinase"/>
</dbReference>
<dbReference type="InterPro" id="IPR000749">
    <property type="entry name" value="ATP-guanido_PTrfase"/>
</dbReference>
<dbReference type="InterPro" id="IPR022414">
    <property type="entry name" value="ATP-guanido_PTrfase_cat"/>
</dbReference>
<dbReference type="InterPro" id="IPR014746">
    <property type="entry name" value="Gln_synth/guanido_kin_cat_dom"/>
</dbReference>
<dbReference type="NCBIfam" id="NF002192">
    <property type="entry name" value="PRK01059.1-2"/>
    <property type="match status" value="1"/>
</dbReference>
<dbReference type="NCBIfam" id="NF002194">
    <property type="entry name" value="PRK01059.1-4"/>
    <property type="match status" value="1"/>
</dbReference>
<dbReference type="PANTHER" id="PTHR11547:SF38">
    <property type="entry name" value="ARGININE KINASE 1-RELATED"/>
    <property type="match status" value="1"/>
</dbReference>
<dbReference type="PANTHER" id="PTHR11547">
    <property type="entry name" value="ARGININE OR CREATINE KINASE"/>
    <property type="match status" value="1"/>
</dbReference>
<dbReference type="Pfam" id="PF00217">
    <property type="entry name" value="ATP-gua_Ptrans"/>
    <property type="match status" value="1"/>
</dbReference>
<dbReference type="SUPFAM" id="SSF55931">
    <property type="entry name" value="Glutamine synthetase/guanido kinase"/>
    <property type="match status" value="1"/>
</dbReference>
<dbReference type="PROSITE" id="PS51510">
    <property type="entry name" value="PHOSPHAGEN_KINASE_C"/>
    <property type="match status" value="1"/>
</dbReference>